<name>Y690_STAAT</name>
<reference key="1">
    <citation type="journal article" date="2007" name="BMC Microbiol.">
        <title>Subtle genetic changes enhance virulence of methicillin resistant and sensitive Staphylococcus aureus.</title>
        <authorList>
            <person name="Highlander S.K."/>
            <person name="Hulten K.G."/>
            <person name="Qin X."/>
            <person name="Jiang H."/>
            <person name="Yerrapragada S."/>
            <person name="Mason E.O. Jr."/>
            <person name="Shang Y."/>
            <person name="Williams T.M."/>
            <person name="Fortunov R.M."/>
            <person name="Liu Y."/>
            <person name="Igboeli O."/>
            <person name="Petrosino J."/>
            <person name="Tirumalai M."/>
            <person name="Uzman A."/>
            <person name="Fox G.E."/>
            <person name="Cardenas A.M."/>
            <person name="Muzny D.M."/>
            <person name="Hemphill L."/>
            <person name="Ding Y."/>
            <person name="Dugan S."/>
            <person name="Blyth P.R."/>
            <person name="Buhay C.J."/>
            <person name="Dinh H.H."/>
            <person name="Hawes A.C."/>
            <person name="Holder M."/>
            <person name="Kovar C.L."/>
            <person name="Lee S.L."/>
            <person name="Liu W."/>
            <person name="Nazareth L.V."/>
            <person name="Wang Q."/>
            <person name="Zhou J."/>
            <person name="Kaplan S.L."/>
            <person name="Weinstock G.M."/>
        </authorList>
    </citation>
    <scope>NUCLEOTIDE SEQUENCE [LARGE SCALE GENOMIC DNA]</scope>
    <source>
        <strain>USA300 / TCH1516</strain>
    </source>
</reference>
<sequence>MGRKWNNIKEKKAQKDKNTSRIYAKFGKEIYVAAKSGEPNPESNQALRLVLERAKTYSVPNHIIEKAIDKAKGAGDENFDHLRYEGFGPSGSMLIVDALTNNVNRTASDVRAAFGKNGGNMGVSGSVAYMFDHVATFGIEGKSVDEILETLMEQDVDVNDVIDDNGLTIVYAEPDQFAVVQDALRAAGVEEFKVAEFEMLPQTDIELSEADQVTFEKLIDALEDLEDVQNVFHNVDLK</sequence>
<comment type="subcellular location">
    <subcellularLocation>
        <location evidence="1">Cytoplasm</location>
    </subcellularLocation>
</comment>
<comment type="similarity">
    <text evidence="1">Belongs to the TACO1 family. YeeN subfamily.</text>
</comment>
<proteinExistence type="inferred from homology"/>
<accession>A8Z190</accession>
<dbReference type="EMBL" id="CP000730">
    <property type="protein sequence ID" value="ABX28711.1"/>
    <property type="molecule type" value="Genomic_DNA"/>
</dbReference>
<dbReference type="RefSeq" id="WP_000532966.1">
    <property type="nucleotide sequence ID" value="NC_010079.1"/>
</dbReference>
<dbReference type="SMR" id="A8Z190"/>
<dbReference type="KEGG" id="sax:USA300HOU_0690"/>
<dbReference type="HOGENOM" id="CLU_062974_2_0_9"/>
<dbReference type="BioCyc" id="SAUR451516-HMP:GTV5-707-MONOMER"/>
<dbReference type="GO" id="GO:0005829">
    <property type="term" value="C:cytosol"/>
    <property type="evidence" value="ECO:0007669"/>
    <property type="project" value="TreeGrafter"/>
</dbReference>
<dbReference type="GO" id="GO:0003677">
    <property type="term" value="F:DNA binding"/>
    <property type="evidence" value="ECO:0007669"/>
    <property type="project" value="UniProtKB-UniRule"/>
</dbReference>
<dbReference type="GO" id="GO:0006355">
    <property type="term" value="P:regulation of DNA-templated transcription"/>
    <property type="evidence" value="ECO:0007669"/>
    <property type="project" value="UniProtKB-UniRule"/>
</dbReference>
<dbReference type="FunFam" id="1.10.10.200:FF:000003">
    <property type="entry name" value="Probable transcriptional regulatory protein YeeN"/>
    <property type="match status" value="1"/>
</dbReference>
<dbReference type="Gene3D" id="1.10.10.200">
    <property type="match status" value="1"/>
</dbReference>
<dbReference type="Gene3D" id="3.30.70.980">
    <property type="match status" value="2"/>
</dbReference>
<dbReference type="HAMAP" id="MF_00693">
    <property type="entry name" value="Transcrip_reg_TACO1"/>
    <property type="match status" value="1"/>
</dbReference>
<dbReference type="HAMAP" id="MF_00918">
    <property type="entry name" value="Transcrip_reg_TACO1_YeeN"/>
    <property type="match status" value="1"/>
</dbReference>
<dbReference type="InterPro" id="IPR017856">
    <property type="entry name" value="Integrase-like_N"/>
</dbReference>
<dbReference type="InterPro" id="IPR048300">
    <property type="entry name" value="TACO1_YebC-like_2nd/3rd_dom"/>
</dbReference>
<dbReference type="InterPro" id="IPR049083">
    <property type="entry name" value="TACO1_YebC_N"/>
</dbReference>
<dbReference type="InterPro" id="IPR002876">
    <property type="entry name" value="Transcrip_reg_TACO1-like"/>
</dbReference>
<dbReference type="InterPro" id="IPR026564">
    <property type="entry name" value="Transcrip_reg_TACO1-like_dom3"/>
</dbReference>
<dbReference type="InterPro" id="IPR026562">
    <property type="entry name" value="Transcrip_reg_TACO1_YeeN"/>
</dbReference>
<dbReference type="InterPro" id="IPR029072">
    <property type="entry name" value="YebC-like"/>
</dbReference>
<dbReference type="NCBIfam" id="NF001030">
    <property type="entry name" value="PRK00110.1"/>
    <property type="match status" value="1"/>
</dbReference>
<dbReference type="NCBIfam" id="NF009044">
    <property type="entry name" value="PRK12378.1"/>
    <property type="match status" value="1"/>
</dbReference>
<dbReference type="NCBIfam" id="TIGR01033">
    <property type="entry name" value="YebC/PmpR family DNA-binding transcriptional regulator"/>
    <property type="match status" value="1"/>
</dbReference>
<dbReference type="PANTHER" id="PTHR12532">
    <property type="entry name" value="TRANSLATIONAL ACTIVATOR OF CYTOCHROME C OXIDASE 1"/>
    <property type="match status" value="1"/>
</dbReference>
<dbReference type="PANTHER" id="PTHR12532:SF0">
    <property type="entry name" value="TRANSLATIONAL ACTIVATOR OF CYTOCHROME C OXIDASE 1"/>
    <property type="match status" value="1"/>
</dbReference>
<dbReference type="Pfam" id="PF20772">
    <property type="entry name" value="TACO1_YebC_N"/>
    <property type="match status" value="1"/>
</dbReference>
<dbReference type="Pfam" id="PF01709">
    <property type="entry name" value="Transcrip_reg"/>
    <property type="match status" value="1"/>
</dbReference>
<dbReference type="SUPFAM" id="SSF75625">
    <property type="entry name" value="YebC-like"/>
    <property type="match status" value="1"/>
</dbReference>
<organism>
    <name type="scientific">Staphylococcus aureus (strain USA300 / TCH1516)</name>
    <dbReference type="NCBI Taxonomy" id="451516"/>
    <lineage>
        <taxon>Bacteria</taxon>
        <taxon>Bacillati</taxon>
        <taxon>Bacillota</taxon>
        <taxon>Bacilli</taxon>
        <taxon>Bacillales</taxon>
        <taxon>Staphylococcaceae</taxon>
        <taxon>Staphylococcus</taxon>
    </lineage>
</organism>
<feature type="chain" id="PRO_1000083173" description="Probable transcriptional regulatory protein USA300HOU_0690">
    <location>
        <begin position="1"/>
        <end position="238"/>
    </location>
</feature>
<evidence type="ECO:0000255" key="1">
    <source>
        <dbReference type="HAMAP-Rule" id="MF_00918"/>
    </source>
</evidence>
<gene>
    <name type="ordered locus">USA300HOU_0690</name>
</gene>
<protein>
    <recommendedName>
        <fullName evidence="1">Probable transcriptional regulatory protein USA300HOU_0690</fullName>
    </recommendedName>
</protein>
<keyword id="KW-0963">Cytoplasm</keyword>
<keyword id="KW-0238">DNA-binding</keyword>
<keyword id="KW-0804">Transcription</keyword>
<keyword id="KW-0805">Transcription regulation</keyword>